<dbReference type="EMBL" id="DS027696">
    <property type="protein sequence ID" value="EAW19127.1"/>
    <property type="status" value="ALT_SEQ"/>
    <property type="molecule type" value="Genomic_DNA"/>
</dbReference>
<dbReference type="RefSeq" id="XP_001261024.1">
    <property type="nucleotide sequence ID" value="XM_001261023.1"/>
</dbReference>
<dbReference type="SMR" id="A1DIC0"/>
<dbReference type="STRING" id="331117.A1DIC0"/>
<dbReference type="GeneID" id="4587582"/>
<dbReference type="KEGG" id="nfi:NFIA_090850"/>
<dbReference type="VEuPathDB" id="FungiDB:NFIA_090850"/>
<dbReference type="eggNOG" id="ENOG502QUI0">
    <property type="taxonomic scope" value="Eukaryota"/>
</dbReference>
<dbReference type="OrthoDB" id="5365785at2759"/>
<dbReference type="Proteomes" id="UP000006702">
    <property type="component" value="Unassembled WGS sequence"/>
</dbReference>
<dbReference type="GO" id="GO:0005634">
    <property type="term" value="C:nucleus"/>
    <property type="evidence" value="ECO:0007669"/>
    <property type="project" value="UniProtKB-SubCell"/>
</dbReference>
<dbReference type="GO" id="GO:0003677">
    <property type="term" value="F:DNA binding"/>
    <property type="evidence" value="ECO:0007669"/>
    <property type="project" value="UniProtKB-KW"/>
</dbReference>
<dbReference type="GO" id="GO:0000981">
    <property type="term" value="F:DNA-binding transcription factor activity, RNA polymerase II-specific"/>
    <property type="evidence" value="ECO:0007669"/>
    <property type="project" value="InterPro"/>
</dbReference>
<dbReference type="GO" id="GO:0008270">
    <property type="term" value="F:zinc ion binding"/>
    <property type="evidence" value="ECO:0007669"/>
    <property type="project" value="InterPro"/>
</dbReference>
<dbReference type="GO" id="GO:0006351">
    <property type="term" value="P:DNA-templated transcription"/>
    <property type="evidence" value="ECO:0007669"/>
    <property type="project" value="InterPro"/>
</dbReference>
<dbReference type="GO" id="GO:0045893">
    <property type="term" value="P:positive regulation of DNA-templated transcription"/>
    <property type="evidence" value="ECO:0000250"/>
    <property type="project" value="UniProtKB"/>
</dbReference>
<dbReference type="GO" id="GO:0045493">
    <property type="term" value="P:xylan catabolic process"/>
    <property type="evidence" value="ECO:0000250"/>
    <property type="project" value="UniProtKB"/>
</dbReference>
<dbReference type="CDD" id="cd12148">
    <property type="entry name" value="fungal_TF_MHR"/>
    <property type="match status" value="1"/>
</dbReference>
<dbReference type="CDD" id="cd00067">
    <property type="entry name" value="GAL4"/>
    <property type="match status" value="1"/>
</dbReference>
<dbReference type="FunFam" id="4.10.240.10:FF:000004">
    <property type="entry name" value="Xylanolytic transcriptional activator XlnR"/>
    <property type="match status" value="1"/>
</dbReference>
<dbReference type="Gene3D" id="4.10.240.10">
    <property type="entry name" value="Zn(2)-C6 fungal-type DNA-binding domain"/>
    <property type="match status" value="1"/>
</dbReference>
<dbReference type="InterPro" id="IPR007219">
    <property type="entry name" value="Transcription_factor_dom_fun"/>
</dbReference>
<dbReference type="InterPro" id="IPR051439">
    <property type="entry name" value="XlnR/Xlr1"/>
</dbReference>
<dbReference type="InterPro" id="IPR036864">
    <property type="entry name" value="Zn2-C6_fun-type_DNA-bd_sf"/>
</dbReference>
<dbReference type="InterPro" id="IPR001138">
    <property type="entry name" value="Zn2Cys6_DnaBD"/>
</dbReference>
<dbReference type="PANTHER" id="PTHR47663">
    <property type="entry name" value="XYLANOLYTIC TRANSCRIPTIONAL ACTIVATOR XLNR-RELATED"/>
    <property type="match status" value="1"/>
</dbReference>
<dbReference type="PANTHER" id="PTHR47663:SF1">
    <property type="entry name" value="XYLANOLYTIC TRANSCRIPTIONAL ACTIVATOR XLNR-RELATED"/>
    <property type="match status" value="1"/>
</dbReference>
<dbReference type="Pfam" id="PF04082">
    <property type="entry name" value="Fungal_trans"/>
    <property type="match status" value="1"/>
</dbReference>
<dbReference type="Pfam" id="PF00172">
    <property type="entry name" value="Zn_clus"/>
    <property type="match status" value="1"/>
</dbReference>
<dbReference type="SMART" id="SM00906">
    <property type="entry name" value="Fungal_trans"/>
    <property type="match status" value="1"/>
</dbReference>
<dbReference type="SMART" id="SM00066">
    <property type="entry name" value="GAL4"/>
    <property type="match status" value="1"/>
</dbReference>
<dbReference type="SUPFAM" id="SSF57701">
    <property type="entry name" value="Zn2/Cys6 DNA-binding domain"/>
    <property type="match status" value="1"/>
</dbReference>
<dbReference type="PROSITE" id="PS50048">
    <property type="entry name" value="ZN2_CY6_FUNGAL_2"/>
    <property type="match status" value="1"/>
</dbReference>
<organism>
    <name type="scientific">Neosartorya fischeri (strain ATCC 1020 / DSM 3700 / CBS 544.65 / FGSC A1164 / JCM 1740 / NRRL 181 / WB 181)</name>
    <name type="common">Aspergillus fischerianus</name>
    <dbReference type="NCBI Taxonomy" id="331117"/>
    <lineage>
        <taxon>Eukaryota</taxon>
        <taxon>Fungi</taxon>
        <taxon>Dikarya</taxon>
        <taxon>Ascomycota</taxon>
        <taxon>Pezizomycotina</taxon>
        <taxon>Eurotiomycetes</taxon>
        <taxon>Eurotiomycetidae</taxon>
        <taxon>Eurotiales</taxon>
        <taxon>Aspergillaceae</taxon>
        <taxon>Aspergillus</taxon>
        <taxon>Aspergillus subgen. Fumigati</taxon>
    </lineage>
</organism>
<name>XLNR_NEOFI</name>
<protein>
    <recommendedName>
        <fullName>Xylanolytic transcriptional activator xlnR</fullName>
    </recommendedName>
    <alternativeName>
        <fullName>Xylanase regulator</fullName>
    </alternativeName>
</protein>
<gene>
    <name type="primary">xlnR</name>
    <name type="ORF">NFIA_090850</name>
</gene>
<sequence length="950" mass="103771">MSTTSLQHFSHSYSPFPSSRSSNRMAQSQTSGLDTLAEGSQYALEQLQMSREAAGDGEATNSMGKPKDQYQIDNDNHHNNHSLPSFKNSSQRDPLVEARSTIRKNSASAPVRRRISRACDQCNQLRTKCDGQNPCAHCIEFGLTCEYARERKKRGKASKKDLAAAAAAATNPGQPNGSSGKEDAAMVGGHTSPDRRPTLNGRYDPAFEVPRNLNGSAQHSEASGMVGMQNSQHLPPHSQSSMGGGLEGLSLNGYNGLNDSSRPSMPVPELQSLHMLHNSHTNPRSPSSVLPHHRYNGGYNDSAYSLMNPQEPNSTSISHFRLGSSTENPPNSFLGLSPPAQSPGWLPLPSPSPANFPSFSMASFSTTLRYPVLHPVLPHIASIIPQSLACDLLDVYFTSSSSSHLSPQSPYVVGYIFRKQSFLHPTKPRVCTPGLLASMLWVAAQTSDAPFLTSPPSARGRVCQKLLELTIGLLRPLIHGPAPGETSPNYAANMVINGVALGGFGVSMDQLGAQSSATGAVDDVATYVHLATVISASEYKAASMRWWTAAWSLARELKLGRELPPNTPHSRPDAERDGDPDADLSKRHPPPLITSMGHGPGNTVINITEEEREERRRLWWLLYATDRHLALCYNRPLTLLDKECEGLLQPMNDDLWQAGDFATYRQAGPPVECTGHSMFGYFLPLMTILGEIVDLQQARNHPRFGLAFRNSAECEAQVLEIARQLDVYAQSLKEFETRYTSSLALGAAETEAAMEGSHLNHVSPSGRSSSTVESRVNESIVHTKMVVAYGTHIMHVLHILLAGKWDPINLLDDNDLWISSESFVAAMGHAVGAAEAASEILEYDPDLSFMPFFFGIYLLQGSFLLLLTADKLQGDASPSVVRACETIVRAHEACVVTLNTEYQRTFRKVMRSALAQVRGRLPEDFGEQQQRRREVLALYRWTGDGSGLAL</sequence>
<accession>A1DIC0</accession>
<proteinExistence type="inferred from homology"/>
<evidence type="ECO:0000250" key="1"/>
<evidence type="ECO:0000255" key="2">
    <source>
        <dbReference type="PROSITE-ProRule" id="PRU00227"/>
    </source>
</evidence>
<evidence type="ECO:0000256" key="3">
    <source>
        <dbReference type="SAM" id="MobiDB-lite"/>
    </source>
</evidence>
<evidence type="ECO:0000305" key="4"/>
<keyword id="KW-0010">Activator</keyword>
<keyword id="KW-0238">DNA-binding</keyword>
<keyword id="KW-0479">Metal-binding</keyword>
<keyword id="KW-0539">Nucleus</keyword>
<keyword id="KW-1185">Reference proteome</keyword>
<keyword id="KW-0804">Transcription</keyword>
<keyword id="KW-0805">Transcription regulation</keyword>
<keyword id="KW-0862">Zinc</keyword>
<reference key="1">
    <citation type="journal article" date="2008" name="PLoS Genet.">
        <title>Genomic islands in the pathogenic filamentous fungus Aspergillus fumigatus.</title>
        <authorList>
            <person name="Fedorova N.D."/>
            <person name="Khaldi N."/>
            <person name="Joardar V.S."/>
            <person name="Maiti R."/>
            <person name="Amedeo P."/>
            <person name="Anderson M.J."/>
            <person name="Crabtree J."/>
            <person name="Silva J.C."/>
            <person name="Badger J.H."/>
            <person name="Albarraq A."/>
            <person name="Angiuoli S."/>
            <person name="Bussey H."/>
            <person name="Bowyer P."/>
            <person name="Cotty P.J."/>
            <person name="Dyer P.S."/>
            <person name="Egan A."/>
            <person name="Galens K."/>
            <person name="Fraser-Liggett C.M."/>
            <person name="Haas B.J."/>
            <person name="Inman J.M."/>
            <person name="Kent R."/>
            <person name="Lemieux S."/>
            <person name="Malavazi I."/>
            <person name="Orvis J."/>
            <person name="Roemer T."/>
            <person name="Ronning C.M."/>
            <person name="Sundaram J.P."/>
            <person name="Sutton G."/>
            <person name="Turner G."/>
            <person name="Venter J.C."/>
            <person name="White O.R."/>
            <person name="Whitty B.R."/>
            <person name="Youngman P."/>
            <person name="Wolfe K.H."/>
            <person name="Goldman G.H."/>
            <person name="Wortman J.R."/>
            <person name="Jiang B."/>
            <person name="Denning D.W."/>
            <person name="Nierman W.C."/>
        </authorList>
    </citation>
    <scope>NUCLEOTIDE SEQUENCE [LARGE SCALE GENOMIC DNA]</scope>
    <source>
        <strain>ATCC 1020 / DSM 3700 / CBS 544.65 / FGSC A1164 / JCM 1740 / NRRL 181 / WB 181</strain>
    </source>
</reference>
<feature type="chain" id="PRO_0000393157" description="Xylanolytic transcriptional activator xlnR">
    <location>
        <begin position="1"/>
        <end position="950"/>
    </location>
</feature>
<feature type="DNA-binding region" description="Zn(2)-C6 fungal-type" evidence="2">
    <location>
        <begin position="119"/>
        <end position="145"/>
    </location>
</feature>
<feature type="region of interest" description="Disordered" evidence="3">
    <location>
        <begin position="1"/>
        <end position="97"/>
    </location>
</feature>
<feature type="region of interest" description="Disordered" evidence="3">
    <location>
        <begin position="163"/>
        <end position="247"/>
    </location>
</feature>
<feature type="region of interest" description="Disordered" evidence="3">
    <location>
        <begin position="300"/>
        <end position="329"/>
    </location>
</feature>
<feature type="region of interest" description="Disordered" evidence="3">
    <location>
        <begin position="561"/>
        <end position="603"/>
    </location>
</feature>
<feature type="compositionally biased region" description="Low complexity" evidence="3">
    <location>
        <begin position="8"/>
        <end position="22"/>
    </location>
</feature>
<feature type="compositionally biased region" description="Polar residues" evidence="3">
    <location>
        <begin position="23"/>
        <end position="33"/>
    </location>
</feature>
<feature type="compositionally biased region" description="Basic and acidic residues" evidence="3">
    <location>
        <begin position="65"/>
        <end position="78"/>
    </location>
</feature>
<feature type="compositionally biased region" description="Polar residues" evidence="3">
    <location>
        <begin position="81"/>
        <end position="92"/>
    </location>
</feature>
<feature type="compositionally biased region" description="Polar residues" evidence="3">
    <location>
        <begin position="302"/>
        <end position="329"/>
    </location>
</feature>
<feature type="compositionally biased region" description="Basic and acidic residues" evidence="3">
    <location>
        <begin position="570"/>
        <end position="586"/>
    </location>
</feature>
<comment type="function">
    <text evidence="1">Transcriptional activator of the xylanolytic system. Involved in the regulation of extracellular cellulolytic and xylanolytic genes and in the regulation of the intracellular activities of D-xylose catabolic genes in the pentose catabolic pathway (PCP) in response to the presence of D-xylose (By similarity).</text>
</comment>
<comment type="subcellular location">
    <subcellularLocation>
        <location evidence="2">Nucleus</location>
    </subcellularLocation>
</comment>
<comment type="similarity">
    <text evidence="4">Belongs to the xlnR/xlr1 family.</text>
</comment>
<comment type="sequence caution" evidence="4">
    <conflict type="erroneous gene model prediction">
        <sequence resource="EMBL-CDS" id="EAW19127"/>
    </conflict>
</comment>
<comment type="sequence caution" evidence="4">
    <conflict type="erroneous initiation">
        <sequence resource="EMBL-CDS" id="EAW19127"/>
    </conflict>
    <text>Truncated N-terminus.</text>
</comment>